<accession>B2THR0</accession>
<sequence length="330" mass="36135">MSKVSFIGGGSFGTALAILLAEKGNTVSIYNRDKKVVDDININRRNDKYIKNLEILSNIKAFDNLEKATENTEYIVLAIPSHTIRSICKQLKSKIKQETIIISIAKGIEEHTDKRLSEVIKEELNNPIVVLSGPSHAEEVVLKLPTTLVVSSENMNSASEVQNLFMTSFFRVYTNQDLVGVEVGGAVKNIIALAAGILDGLGYGDNTKAALMTRGMKEISRIGSALGGREETFYGLTGMGDLIVTCTSNHSRNRKAGLLIGSGMGVDKAIKEIGMVVEGVKACKAFYELKEKIGVSMPITDILYKVLFEKKDPKLGIEELMLREKKSEIF</sequence>
<gene>
    <name evidence="1" type="primary">gpsA</name>
    <name type="ordered locus">CLL_A1204</name>
</gene>
<evidence type="ECO:0000255" key="1">
    <source>
        <dbReference type="HAMAP-Rule" id="MF_00394"/>
    </source>
</evidence>
<organism>
    <name type="scientific">Clostridium botulinum (strain Eklund 17B / Type B)</name>
    <dbReference type="NCBI Taxonomy" id="935198"/>
    <lineage>
        <taxon>Bacteria</taxon>
        <taxon>Bacillati</taxon>
        <taxon>Bacillota</taxon>
        <taxon>Clostridia</taxon>
        <taxon>Eubacteriales</taxon>
        <taxon>Clostridiaceae</taxon>
        <taxon>Clostridium</taxon>
    </lineage>
</organism>
<name>GPDA_CLOBB</name>
<proteinExistence type="inferred from homology"/>
<protein>
    <recommendedName>
        <fullName evidence="1">Glycerol-3-phosphate dehydrogenase [NAD(P)+]</fullName>
        <ecNumber evidence="1">1.1.1.94</ecNumber>
    </recommendedName>
    <alternativeName>
        <fullName evidence="1">NAD(P)(+)-dependent glycerol-3-phosphate dehydrogenase</fullName>
    </alternativeName>
    <alternativeName>
        <fullName evidence="1">NAD(P)H-dependent dihydroxyacetone-phosphate reductase</fullName>
    </alternativeName>
</protein>
<feature type="chain" id="PRO_1000190128" description="Glycerol-3-phosphate dehydrogenase [NAD(P)+]">
    <location>
        <begin position="1"/>
        <end position="330"/>
    </location>
</feature>
<feature type="active site" description="Proton acceptor" evidence="1">
    <location>
        <position position="188"/>
    </location>
</feature>
<feature type="binding site" evidence="1">
    <location>
        <position position="11"/>
    </location>
    <ligand>
        <name>NADPH</name>
        <dbReference type="ChEBI" id="CHEBI:57783"/>
    </ligand>
</feature>
<feature type="binding site" evidence="1">
    <location>
        <position position="12"/>
    </location>
    <ligand>
        <name>NADPH</name>
        <dbReference type="ChEBI" id="CHEBI:57783"/>
    </ligand>
</feature>
<feature type="binding site" evidence="1">
    <location>
        <position position="32"/>
    </location>
    <ligand>
        <name>NADPH</name>
        <dbReference type="ChEBI" id="CHEBI:57783"/>
    </ligand>
</feature>
<feature type="binding site" evidence="1">
    <location>
        <position position="106"/>
    </location>
    <ligand>
        <name>NADPH</name>
        <dbReference type="ChEBI" id="CHEBI:57783"/>
    </ligand>
</feature>
<feature type="binding site" evidence="1">
    <location>
        <position position="106"/>
    </location>
    <ligand>
        <name>sn-glycerol 3-phosphate</name>
        <dbReference type="ChEBI" id="CHEBI:57597"/>
    </ligand>
</feature>
<feature type="binding site" evidence="1">
    <location>
        <position position="133"/>
    </location>
    <ligand>
        <name>sn-glycerol 3-phosphate</name>
        <dbReference type="ChEBI" id="CHEBI:57597"/>
    </ligand>
</feature>
<feature type="binding site" evidence="1">
    <location>
        <position position="135"/>
    </location>
    <ligand>
        <name>sn-glycerol 3-phosphate</name>
        <dbReference type="ChEBI" id="CHEBI:57597"/>
    </ligand>
</feature>
<feature type="binding site" evidence="1">
    <location>
        <position position="137"/>
    </location>
    <ligand>
        <name>NADPH</name>
        <dbReference type="ChEBI" id="CHEBI:57783"/>
    </ligand>
</feature>
<feature type="binding site" evidence="1">
    <location>
        <position position="188"/>
    </location>
    <ligand>
        <name>sn-glycerol 3-phosphate</name>
        <dbReference type="ChEBI" id="CHEBI:57597"/>
    </ligand>
</feature>
<feature type="binding site" evidence="1">
    <location>
        <position position="241"/>
    </location>
    <ligand>
        <name>sn-glycerol 3-phosphate</name>
        <dbReference type="ChEBI" id="CHEBI:57597"/>
    </ligand>
</feature>
<feature type="binding site" evidence="1">
    <location>
        <position position="251"/>
    </location>
    <ligand>
        <name>sn-glycerol 3-phosphate</name>
        <dbReference type="ChEBI" id="CHEBI:57597"/>
    </ligand>
</feature>
<feature type="binding site" evidence="1">
    <location>
        <position position="252"/>
    </location>
    <ligand>
        <name>NADPH</name>
        <dbReference type="ChEBI" id="CHEBI:57783"/>
    </ligand>
</feature>
<feature type="binding site" evidence="1">
    <location>
        <position position="252"/>
    </location>
    <ligand>
        <name>sn-glycerol 3-phosphate</name>
        <dbReference type="ChEBI" id="CHEBI:57597"/>
    </ligand>
</feature>
<feature type="binding site" evidence="1">
    <location>
        <position position="253"/>
    </location>
    <ligand>
        <name>sn-glycerol 3-phosphate</name>
        <dbReference type="ChEBI" id="CHEBI:57597"/>
    </ligand>
</feature>
<feature type="binding site" evidence="1">
    <location>
        <position position="276"/>
    </location>
    <ligand>
        <name>NADPH</name>
        <dbReference type="ChEBI" id="CHEBI:57783"/>
    </ligand>
</feature>
<feature type="binding site" evidence="1">
    <location>
        <position position="278"/>
    </location>
    <ligand>
        <name>NADPH</name>
        <dbReference type="ChEBI" id="CHEBI:57783"/>
    </ligand>
</feature>
<comment type="function">
    <text evidence="1">Catalyzes the reduction of the glycolytic intermediate dihydroxyacetone phosphate (DHAP) to sn-glycerol 3-phosphate (G3P), the key precursor for phospholipid synthesis.</text>
</comment>
<comment type="catalytic activity">
    <reaction evidence="1">
        <text>sn-glycerol 3-phosphate + NAD(+) = dihydroxyacetone phosphate + NADH + H(+)</text>
        <dbReference type="Rhea" id="RHEA:11092"/>
        <dbReference type="ChEBI" id="CHEBI:15378"/>
        <dbReference type="ChEBI" id="CHEBI:57540"/>
        <dbReference type="ChEBI" id="CHEBI:57597"/>
        <dbReference type="ChEBI" id="CHEBI:57642"/>
        <dbReference type="ChEBI" id="CHEBI:57945"/>
        <dbReference type="EC" id="1.1.1.94"/>
    </reaction>
    <physiologicalReaction direction="right-to-left" evidence="1">
        <dbReference type="Rhea" id="RHEA:11094"/>
    </physiologicalReaction>
</comment>
<comment type="catalytic activity">
    <reaction evidence="1">
        <text>sn-glycerol 3-phosphate + NADP(+) = dihydroxyacetone phosphate + NADPH + H(+)</text>
        <dbReference type="Rhea" id="RHEA:11096"/>
        <dbReference type="ChEBI" id="CHEBI:15378"/>
        <dbReference type="ChEBI" id="CHEBI:57597"/>
        <dbReference type="ChEBI" id="CHEBI:57642"/>
        <dbReference type="ChEBI" id="CHEBI:57783"/>
        <dbReference type="ChEBI" id="CHEBI:58349"/>
        <dbReference type="EC" id="1.1.1.94"/>
    </reaction>
    <physiologicalReaction direction="right-to-left" evidence="1">
        <dbReference type="Rhea" id="RHEA:11098"/>
    </physiologicalReaction>
</comment>
<comment type="pathway">
    <text evidence="1">Membrane lipid metabolism; glycerophospholipid metabolism.</text>
</comment>
<comment type="subcellular location">
    <subcellularLocation>
        <location evidence="1">Cytoplasm</location>
    </subcellularLocation>
</comment>
<comment type="similarity">
    <text evidence="1">Belongs to the NAD-dependent glycerol-3-phosphate dehydrogenase family.</text>
</comment>
<reference key="1">
    <citation type="submission" date="2008-04" db="EMBL/GenBank/DDBJ databases">
        <title>Complete sequence of Clostridium botulinum strain Eklund.</title>
        <authorList>
            <person name="Brinkac L.M."/>
            <person name="Brown J.L."/>
            <person name="Bruce D."/>
            <person name="Detter C."/>
            <person name="Munk C."/>
            <person name="Smith L.A."/>
            <person name="Smith T.J."/>
            <person name="Sutton G."/>
            <person name="Brettin T.S."/>
        </authorList>
    </citation>
    <scope>NUCLEOTIDE SEQUENCE [LARGE SCALE GENOMIC DNA]</scope>
    <source>
        <strain>Eklund 17B / Type B</strain>
    </source>
</reference>
<keyword id="KW-0963">Cytoplasm</keyword>
<keyword id="KW-0444">Lipid biosynthesis</keyword>
<keyword id="KW-0443">Lipid metabolism</keyword>
<keyword id="KW-0520">NAD</keyword>
<keyword id="KW-0521">NADP</keyword>
<keyword id="KW-0547">Nucleotide-binding</keyword>
<keyword id="KW-0560">Oxidoreductase</keyword>
<keyword id="KW-0594">Phospholipid biosynthesis</keyword>
<keyword id="KW-1208">Phospholipid metabolism</keyword>
<dbReference type="EC" id="1.1.1.94" evidence="1"/>
<dbReference type="EMBL" id="CP001056">
    <property type="protein sequence ID" value="ACD22346.1"/>
    <property type="molecule type" value="Genomic_DNA"/>
</dbReference>
<dbReference type="SMR" id="B2THR0"/>
<dbReference type="KEGG" id="cbk:CLL_A1204"/>
<dbReference type="PATRIC" id="fig|935198.13.peg.1149"/>
<dbReference type="HOGENOM" id="CLU_033449_0_2_9"/>
<dbReference type="UniPathway" id="UPA00940"/>
<dbReference type="Proteomes" id="UP000001195">
    <property type="component" value="Chromosome"/>
</dbReference>
<dbReference type="GO" id="GO:0005829">
    <property type="term" value="C:cytosol"/>
    <property type="evidence" value="ECO:0007669"/>
    <property type="project" value="TreeGrafter"/>
</dbReference>
<dbReference type="GO" id="GO:0047952">
    <property type="term" value="F:glycerol-3-phosphate dehydrogenase [NAD(P)+] activity"/>
    <property type="evidence" value="ECO:0007669"/>
    <property type="project" value="UniProtKB-UniRule"/>
</dbReference>
<dbReference type="GO" id="GO:0051287">
    <property type="term" value="F:NAD binding"/>
    <property type="evidence" value="ECO:0007669"/>
    <property type="project" value="InterPro"/>
</dbReference>
<dbReference type="GO" id="GO:0005975">
    <property type="term" value="P:carbohydrate metabolic process"/>
    <property type="evidence" value="ECO:0007669"/>
    <property type="project" value="InterPro"/>
</dbReference>
<dbReference type="GO" id="GO:0046167">
    <property type="term" value="P:glycerol-3-phosphate biosynthetic process"/>
    <property type="evidence" value="ECO:0007669"/>
    <property type="project" value="UniProtKB-UniRule"/>
</dbReference>
<dbReference type="GO" id="GO:0046168">
    <property type="term" value="P:glycerol-3-phosphate catabolic process"/>
    <property type="evidence" value="ECO:0007669"/>
    <property type="project" value="InterPro"/>
</dbReference>
<dbReference type="GO" id="GO:0006650">
    <property type="term" value="P:glycerophospholipid metabolic process"/>
    <property type="evidence" value="ECO:0007669"/>
    <property type="project" value="UniProtKB-UniRule"/>
</dbReference>
<dbReference type="GO" id="GO:0008654">
    <property type="term" value="P:phospholipid biosynthetic process"/>
    <property type="evidence" value="ECO:0007669"/>
    <property type="project" value="UniProtKB-KW"/>
</dbReference>
<dbReference type="FunFam" id="1.10.1040.10:FF:000001">
    <property type="entry name" value="Glycerol-3-phosphate dehydrogenase [NAD(P)+]"/>
    <property type="match status" value="1"/>
</dbReference>
<dbReference type="FunFam" id="3.40.50.720:FF:000019">
    <property type="entry name" value="Glycerol-3-phosphate dehydrogenase [NAD(P)+]"/>
    <property type="match status" value="1"/>
</dbReference>
<dbReference type="Gene3D" id="1.10.1040.10">
    <property type="entry name" value="N-(1-d-carboxylethyl)-l-norvaline Dehydrogenase, domain 2"/>
    <property type="match status" value="1"/>
</dbReference>
<dbReference type="Gene3D" id="3.40.50.720">
    <property type="entry name" value="NAD(P)-binding Rossmann-like Domain"/>
    <property type="match status" value="1"/>
</dbReference>
<dbReference type="HAMAP" id="MF_00394">
    <property type="entry name" value="NAD_Glyc3P_dehydrog"/>
    <property type="match status" value="1"/>
</dbReference>
<dbReference type="InterPro" id="IPR008927">
    <property type="entry name" value="6-PGluconate_DH-like_C_sf"/>
</dbReference>
<dbReference type="InterPro" id="IPR013328">
    <property type="entry name" value="6PGD_dom2"/>
</dbReference>
<dbReference type="InterPro" id="IPR006168">
    <property type="entry name" value="G3P_DH_NAD-dep"/>
</dbReference>
<dbReference type="InterPro" id="IPR006109">
    <property type="entry name" value="G3P_DH_NAD-dep_C"/>
</dbReference>
<dbReference type="InterPro" id="IPR011128">
    <property type="entry name" value="G3P_DH_NAD-dep_N"/>
</dbReference>
<dbReference type="InterPro" id="IPR036291">
    <property type="entry name" value="NAD(P)-bd_dom_sf"/>
</dbReference>
<dbReference type="NCBIfam" id="NF000940">
    <property type="entry name" value="PRK00094.1-2"/>
    <property type="match status" value="1"/>
</dbReference>
<dbReference type="NCBIfam" id="NF000941">
    <property type="entry name" value="PRK00094.1-3"/>
    <property type="match status" value="1"/>
</dbReference>
<dbReference type="NCBIfam" id="NF000942">
    <property type="entry name" value="PRK00094.1-4"/>
    <property type="match status" value="1"/>
</dbReference>
<dbReference type="PANTHER" id="PTHR11728">
    <property type="entry name" value="GLYCEROL-3-PHOSPHATE DEHYDROGENASE"/>
    <property type="match status" value="1"/>
</dbReference>
<dbReference type="PANTHER" id="PTHR11728:SF1">
    <property type="entry name" value="GLYCEROL-3-PHOSPHATE DEHYDROGENASE [NAD(+)] 2, CHLOROPLASTIC"/>
    <property type="match status" value="1"/>
</dbReference>
<dbReference type="Pfam" id="PF07479">
    <property type="entry name" value="NAD_Gly3P_dh_C"/>
    <property type="match status" value="1"/>
</dbReference>
<dbReference type="Pfam" id="PF01210">
    <property type="entry name" value="NAD_Gly3P_dh_N"/>
    <property type="match status" value="1"/>
</dbReference>
<dbReference type="PIRSF" id="PIRSF000114">
    <property type="entry name" value="Glycerol-3-P_dh"/>
    <property type="match status" value="1"/>
</dbReference>
<dbReference type="PRINTS" id="PR00077">
    <property type="entry name" value="GPDHDRGNASE"/>
</dbReference>
<dbReference type="SUPFAM" id="SSF48179">
    <property type="entry name" value="6-phosphogluconate dehydrogenase C-terminal domain-like"/>
    <property type="match status" value="1"/>
</dbReference>
<dbReference type="SUPFAM" id="SSF51735">
    <property type="entry name" value="NAD(P)-binding Rossmann-fold domains"/>
    <property type="match status" value="1"/>
</dbReference>
<dbReference type="PROSITE" id="PS00957">
    <property type="entry name" value="NAD_G3PDH"/>
    <property type="match status" value="1"/>
</dbReference>